<name>GEP3_CANDC</name>
<feature type="transit peptide" description="Mitochondrion" evidence="2">
    <location>
        <begin position="1"/>
        <end position="40"/>
    </location>
</feature>
<feature type="chain" id="PRO_0000409630" description="Genetic interactor of prohibitins 3, mitochondrial">
    <location>
        <begin position="41"/>
        <end position="634"/>
    </location>
</feature>
<feature type="domain" description="CP-type G" evidence="3">
    <location>
        <begin position="171"/>
        <end position="378"/>
    </location>
</feature>
<keyword id="KW-0496">Mitochondrion</keyword>
<keyword id="KW-0809">Transit peptide</keyword>
<sequence>MFSRLVLLRKVSISLGRYYSSQAHPQTYIYNLLSKSKCRSCGIQLQDKYPDKPGFYRLPGQNDNNTDNKSKTSELNKKYEKILQNLDVSDRNLLINNFSAPKQEHEKITSVPSLQQVTPVEEDACDTLEVQKTQQGQSLSCKRCNDVIYNSKNKSVYDPKRDNLNKSEFPIPKLQQVLSTIPIDAPLVYVFSANDFPMGINQEIFQYRPPQQIFFVMTKSDILIPKTNVAFYNNFKKFLQNYMFKRFNVPRENVFIASGKDRWKMNDLYHFIPNYAYIIGDTNCGKSTLVKSLLINHHVKHWKYEARQQRQNERPNGKQSSSASLKNKDFKQLDRLIDSFSSKNGPGTSHIPGFTRDVVPVDIDGIKQLFDVPGFTTNENMQDIFDKLNHKQIARITKGTSTFKYGSLKSKFDTIKNGQVLSLNGVGYLQFPGQDSMYQIRNVTRFALHKFKNLEKVDSILQRNEIPTSMSSHFIVNRQQQQQQRNEIRGYYKRYIVPPFYGTIDLVIKDIGYINIKPTGKKLTNELMVLYLHPSLEAIIRQPILNYIDPPSPKKLIDGTKMKSFITSDIGKTPFYSRLIPSKIPSDPSSFLASSPSSDYNQLNQYLQIDESSESAYNDILELDETNKYDYWIE</sequence>
<gene>
    <name type="primary">GEP3</name>
    <name type="synonym">FMP48</name>
    <name type="ORF">CD36_87430</name>
</gene>
<dbReference type="EMBL" id="FM992690">
    <property type="protein sequence ID" value="CAX43239.1"/>
    <property type="molecule type" value="Genomic_DNA"/>
</dbReference>
<dbReference type="RefSeq" id="XP_002419643.1">
    <property type="nucleotide sequence ID" value="XM_002419598.1"/>
</dbReference>
<dbReference type="SMR" id="B9WEX6"/>
<dbReference type="GeneID" id="8046860"/>
<dbReference type="KEGG" id="cdu:CD36_87430"/>
<dbReference type="CGD" id="CAL0000170623">
    <property type="gene designation" value="Cd36_87430"/>
</dbReference>
<dbReference type="VEuPathDB" id="FungiDB:CD36_87430"/>
<dbReference type="eggNOG" id="ENOG502S067">
    <property type="taxonomic scope" value="Eukaryota"/>
</dbReference>
<dbReference type="HOGENOM" id="CLU_025792_0_0_1"/>
<dbReference type="OrthoDB" id="1696305at2759"/>
<dbReference type="Proteomes" id="UP000002605">
    <property type="component" value="Chromosome 3"/>
</dbReference>
<dbReference type="GO" id="GO:0005739">
    <property type="term" value="C:mitochondrion"/>
    <property type="evidence" value="ECO:0007669"/>
    <property type="project" value="UniProtKB-SubCell"/>
</dbReference>
<dbReference type="GO" id="GO:0005525">
    <property type="term" value="F:GTP binding"/>
    <property type="evidence" value="ECO:0007669"/>
    <property type="project" value="InterPro"/>
</dbReference>
<dbReference type="Gene3D" id="3.40.50.300">
    <property type="entry name" value="P-loop containing nucleotide triphosphate hydrolases"/>
    <property type="match status" value="1"/>
</dbReference>
<dbReference type="InterPro" id="IPR030378">
    <property type="entry name" value="G_CP_dom"/>
</dbReference>
<dbReference type="InterPro" id="IPR050896">
    <property type="entry name" value="Mito_lipid_metab_GTPase"/>
</dbReference>
<dbReference type="InterPro" id="IPR027417">
    <property type="entry name" value="P-loop_NTPase"/>
</dbReference>
<dbReference type="PANTHER" id="PTHR46434">
    <property type="entry name" value="GENETIC INTERACTOR OF PROHIBITINS 3, MITOCHONDRIAL"/>
    <property type="match status" value="1"/>
</dbReference>
<dbReference type="PANTHER" id="PTHR46434:SF1">
    <property type="entry name" value="GENETIC INTERACTOR OF PROHIBITINS 3, MITOCHONDRIAL"/>
    <property type="match status" value="1"/>
</dbReference>
<dbReference type="SUPFAM" id="SSF52540">
    <property type="entry name" value="P-loop containing nucleoside triphosphate hydrolases"/>
    <property type="match status" value="1"/>
</dbReference>
<dbReference type="PROSITE" id="PS51721">
    <property type="entry name" value="G_CP"/>
    <property type="match status" value="1"/>
</dbReference>
<protein>
    <recommendedName>
        <fullName>Genetic interactor of prohibitins 3, mitochondrial</fullName>
    </recommendedName>
    <alternativeName>
        <fullName>Found in mitochondrial proteome protein 38</fullName>
    </alternativeName>
</protein>
<comment type="function">
    <text evidence="1">May be involved in the mitochondrial lipid metabolism.</text>
</comment>
<comment type="subcellular location">
    <subcellularLocation>
        <location evidence="1">Mitochondrion</location>
    </subcellularLocation>
</comment>
<comment type="similarity">
    <text evidence="3">Belongs to the TRAFAC class YlqF/YawG GTPase family. GEP3 subfamily.</text>
</comment>
<proteinExistence type="inferred from homology"/>
<reference key="1">
    <citation type="journal article" date="2009" name="Genome Res.">
        <title>Comparative genomics of the fungal pathogens Candida dubliniensis and Candida albicans.</title>
        <authorList>
            <person name="Jackson A.P."/>
            <person name="Gamble J.A."/>
            <person name="Yeomans T."/>
            <person name="Moran G.P."/>
            <person name="Saunders D."/>
            <person name="Harris D."/>
            <person name="Aslett M."/>
            <person name="Barrell J.F."/>
            <person name="Butler G."/>
            <person name="Citiulo F."/>
            <person name="Coleman D.C."/>
            <person name="de Groot P.W.J."/>
            <person name="Goodwin T.J."/>
            <person name="Quail M.A."/>
            <person name="McQuillan J."/>
            <person name="Munro C.A."/>
            <person name="Pain A."/>
            <person name="Poulter R.T."/>
            <person name="Rajandream M.A."/>
            <person name="Renauld H."/>
            <person name="Spiering M.J."/>
            <person name="Tivey A."/>
            <person name="Gow N.A.R."/>
            <person name="Barrell B."/>
            <person name="Sullivan D.J."/>
            <person name="Berriman M."/>
        </authorList>
    </citation>
    <scope>NUCLEOTIDE SEQUENCE [LARGE SCALE GENOMIC DNA]</scope>
    <source>
        <strain>CD36 / ATCC MYA-646 / CBS 7987 / NCPF 3949 / NRRL Y-17841</strain>
    </source>
</reference>
<organism>
    <name type="scientific">Candida dubliniensis (strain CD36 / ATCC MYA-646 / CBS 7987 / NCPF 3949 / NRRL Y-17841)</name>
    <name type="common">Yeast</name>
    <dbReference type="NCBI Taxonomy" id="573826"/>
    <lineage>
        <taxon>Eukaryota</taxon>
        <taxon>Fungi</taxon>
        <taxon>Dikarya</taxon>
        <taxon>Ascomycota</taxon>
        <taxon>Saccharomycotina</taxon>
        <taxon>Pichiomycetes</taxon>
        <taxon>Debaryomycetaceae</taxon>
        <taxon>Candida/Lodderomyces clade</taxon>
        <taxon>Candida</taxon>
    </lineage>
</organism>
<accession>B9WEX6</accession>
<evidence type="ECO:0000250" key="1"/>
<evidence type="ECO:0000255" key="2"/>
<evidence type="ECO:0000255" key="3">
    <source>
        <dbReference type="PROSITE-ProRule" id="PRU01058"/>
    </source>
</evidence>